<protein>
    <recommendedName>
        <fullName evidence="1">Small ribosomal subunit protein uS11c</fullName>
    </recommendedName>
    <alternativeName>
        <fullName evidence="3">30S ribosomal protein S11, chloroplastic</fullName>
    </alternativeName>
</protein>
<comment type="subunit">
    <text evidence="1">Part of the 30S ribosomal subunit.</text>
</comment>
<comment type="subcellular location">
    <subcellularLocation>
        <location>Plastid</location>
        <location>Chloroplast</location>
    </subcellularLocation>
</comment>
<comment type="similarity">
    <text evidence="1">Belongs to the universal ribosomal protein uS11 family.</text>
</comment>
<geneLocation type="chloroplast"/>
<gene>
    <name evidence="1" type="primary">rps11</name>
</gene>
<reference key="1">
    <citation type="journal article" date="2006" name="Transgenic Res.">
        <title>Efficient and stable transformation of Lactuca sativa L. cv. Cisco (lettuce) plastids.</title>
        <authorList>
            <person name="Kanamoto H."/>
            <person name="Yamashita A."/>
            <person name="Asao H."/>
            <person name="Okumura S."/>
            <person name="Takase H."/>
            <person name="Hattori M."/>
            <person name="Yokota A."/>
            <person name="Tomizawa K."/>
        </authorList>
    </citation>
    <scope>NUCLEOTIDE SEQUENCE [LARGE SCALE GENOMIC DNA]</scope>
    <source>
        <strain>cv. Cisco</strain>
    </source>
</reference>
<reference key="2">
    <citation type="submission" date="2006-01" db="EMBL/GenBank/DDBJ databases">
        <title>A comparison of the first two published chloroplast genomes in Asteraceae: Lactuca and Helianthus.</title>
        <authorList>
            <person name="Timme R.E."/>
            <person name="Kuehl J.V."/>
            <person name="Boore J.L."/>
            <person name="Jansen R.K."/>
        </authorList>
    </citation>
    <scope>NUCLEOTIDE SEQUENCE [LARGE SCALE GENOMIC DNA]</scope>
    <source>
        <strain>cv. Salinas</strain>
    </source>
</reference>
<name>RR11_LACSA</name>
<keyword id="KW-0150">Chloroplast</keyword>
<keyword id="KW-0934">Plastid</keyword>
<keyword id="KW-0687">Ribonucleoprotein</keyword>
<keyword id="KW-0689">Ribosomal protein</keyword>
<keyword id="KW-0694">RNA-binding</keyword>
<keyword id="KW-0699">rRNA-binding</keyword>
<accession>Q332U4</accession>
<accession>Q1KXI9</accession>
<sequence>MAKAIPKKGSRGRIGSRKSTRKIPKGVIHIQASFNNTIVTVTDVRGRVVSWSSAGTSGFRGTKRGTPFAAQTAAGHAIRAVVDQGMQRAEVMIKGPGLGRDAALRAIRRSGILLTFVRDVTPMPHNGCRPPKKRRV</sequence>
<organism>
    <name type="scientific">Lactuca sativa</name>
    <name type="common">Garden lettuce</name>
    <dbReference type="NCBI Taxonomy" id="4236"/>
    <lineage>
        <taxon>Eukaryota</taxon>
        <taxon>Viridiplantae</taxon>
        <taxon>Streptophyta</taxon>
        <taxon>Embryophyta</taxon>
        <taxon>Tracheophyta</taxon>
        <taxon>Spermatophyta</taxon>
        <taxon>Magnoliopsida</taxon>
        <taxon>eudicotyledons</taxon>
        <taxon>Gunneridae</taxon>
        <taxon>Pentapetalae</taxon>
        <taxon>asterids</taxon>
        <taxon>campanulids</taxon>
        <taxon>Asterales</taxon>
        <taxon>Asteraceae</taxon>
        <taxon>Cichorioideae</taxon>
        <taxon>Cichorieae</taxon>
        <taxon>Lactucinae</taxon>
        <taxon>Lactuca</taxon>
    </lineage>
</organism>
<evidence type="ECO:0000255" key="1">
    <source>
        <dbReference type="HAMAP-Rule" id="MF_01310"/>
    </source>
</evidence>
<evidence type="ECO:0000256" key="2">
    <source>
        <dbReference type="SAM" id="MobiDB-lite"/>
    </source>
</evidence>
<evidence type="ECO:0000305" key="3"/>
<proteinExistence type="inferred from homology"/>
<dbReference type="EMBL" id="AP007232">
    <property type="protein sequence ID" value="BAE47628.1"/>
    <property type="molecule type" value="Genomic_DNA"/>
</dbReference>
<dbReference type="EMBL" id="DQ383816">
    <property type="protein sequence ID" value="ABD47265.1"/>
    <property type="molecule type" value="Genomic_DNA"/>
</dbReference>
<dbReference type="RefSeq" id="YP_398361.1">
    <property type="nucleotide sequence ID" value="NC_007578.1"/>
</dbReference>
<dbReference type="SMR" id="Q332U4"/>
<dbReference type="EnsemblPlants" id="rna-gnl|WGS:NBSK|LSAT_6X69061_mrna">
    <property type="protein sequence ID" value="cds-PLY78160.1"/>
    <property type="gene ID" value="gene-LSAT_6X69061"/>
</dbReference>
<dbReference type="GeneID" id="3772826"/>
<dbReference type="Gramene" id="rna-gnl|WGS:NBSK|LSAT_6X69061_mrna">
    <property type="protein sequence ID" value="cds-PLY78160.1"/>
    <property type="gene ID" value="gene-LSAT_6X69061"/>
</dbReference>
<dbReference type="KEGG" id="lsv:3772826"/>
<dbReference type="OrthoDB" id="360088at2759"/>
<dbReference type="GO" id="GO:0009507">
    <property type="term" value="C:chloroplast"/>
    <property type="evidence" value="ECO:0007669"/>
    <property type="project" value="UniProtKB-SubCell"/>
</dbReference>
<dbReference type="GO" id="GO:1990904">
    <property type="term" value="C:ribonucleoprotein complex"/>
    <property type="evidence" value="ECO:0007669"/>
    <property type="project" value="UniProtKB-KW"/>
</dbReference>
<dbReference type="GO" id="GO:0005840">
    <property type="term" value="C:ribosome"/>
    <property type="evidence" value="ECO:0007669"/>
    <property type="project" value="UniProtKB-KW"/>
</dbReference>
<dbReference type="GO" id="GO:0019843">
    <property type="term" value="F:rRNA binding"/>
    <property type="evidence" value="ECO:0007669"/>
    <property type="project" value="UniProtKB-UniRule"/>
</dbReference>
<dbReference type="GO" id="GO:0003735">
    <property type="term" value="F:structural constituent of ribosome"/>
    <property type="evidence" value="ECO:0007669"/>
    <property type="project" value="InterPro"/>
</dbReference>
<dbReference type="GO" id="GO:0006412">
    <property type="term" value="P:translation"/>
    <property type="evidence" value="ECO:0007669"/>
    <property type="project" value="UniProtKB-UniRule"/>
</dbReference>
<dbReference type="FunFam" id="3.30.420.80:FF:000003">
    <property type="entry name" value="30S ribosomal protein S11, chloroplastic"/>
    <property type="match status" value="1"/>
</dbReference>
<dbReference type="Gene3D" id="3.30.420.80">
    <property type="entry name" value="Ribosomal protein S11"/>
    <property type="match status" value="1"/>
</dbReference>
<dbReference type="HAMAP" id="MF_01310">
    <property type="entry name" value="Ribosomal_uS11"/>
    <property type="match status" value="1"/>
</dbReference>
<dbReference type="InterPro" id="IPR001971">
    <property type="entry name" value="Ribosomal_uS11"/>
</dbReference>
<dbReference type="InterPro" id="IPR019981">
    <property type="entry name" value="Ribosomal_uS11_bac-type"/>
</dbReference>
<dbReference type="InterPro" id="IPR018102">
    <property type="entry name" value="Ribosomal_uS11_CS"/>
</dbReference>
<dbReference type="InterPro" id="IPR036967">
    <property type="entry name" value="Ribosomal_uS11_sf"/>
</dbReference>
<dbReference type="NCBIfam" id="NF003698">
    <property type="entry name" value="PRK05309.1"/>
    <property type="match status" value="1"/>
</dbReference>
<dbReference type="NCBIfam" id="TIGR03632">
    <property type="entry name" value="uS11_bact"/>
    <property type="match status" value="1"/>
</dbReference>
<dbReference type="PANTHER" id="PTHR11759">
    <property type="entry name" value="40S RIBOSOMAL PROTEIN S14/30S RIBOSOMAL PROTEIN S11"/>
    <property type="match status" value="1"/>
</dbReference>
<dbReference type="Pfam" id="PF00411">
    <property type="entry name" value="Ribosomal_S11"/>
    <property type="match status" value="1"/>
</dbReference>
<dbReference type="PIRSF" id="PIRSF002131">
    <property type="entry name" value="Ribosomal_S11"/>
    <property type="match status" value="1"/>
</dbReference>
<dbReference type="SUPFAM" id="SSF53137">
    <property type="entry name" value="Translational machinery components"/>
    <property type="match status" value="1"/>
</dbReference>
<dbReference type="PROSITE" id="PS00054">
    <property type="entry name" value="RIBOSOMAL_S11"/>
    <property type="match status" value="1"/>
</dbReference>
<feature type="chain" id="PRO_0000230451" description="Small ribosomal subunit protein uS11c">
    <location>
        <begin position="1"/>
        <end position="136"/>
    </location>
</feature>
<feature type="region of interest" description="Disordered" evidence="2">
    <location>
        <begin position="1"/>
        <end position="22"/>
    </location>
</feature>